<evidence type="ECO:0000255" key="1">
    <source>
        <dbReference type="HAMAP-Rule" id="MF_00011"/>
    </source>
</evidence>
<keyword id="KW-0963">Cytoplasm</keyword>
<keyword id="KW-0342">GTP-binding</keyword>
<keyword id="KW-0436">Ligase</keyword>
<keyword id="KW-0460">Magnesium</keyword>
<keyword id="KW-0479">Metal-binding</keyword>
<keyword id="KW-0547">Nucleotide-binding</keyword>
<keyword id="KW-0658">Purine biosynthesis</keyword>
<accession>Q65S32</accession>
<sequence length="432" mass="47002">MGKSVVVLGAQWGDEGKGKIVDLLTDRAKYVVRYQGGHNAGHTLIINGEKTVLRLIPSGILRANVTCLIGNGVVLSPSALMQEMGELESRGINVRERLLISEACPLILPYHVAMDHAREAALGKKAIGTTGRGIGPAYEDKVARRGLRVGDLFDKEQFAEKLKNILDYYNFQLVNYYKVEAVDYQKTLDDVMAVADIITGMVADIGAILNTARKNGDNILFEGAQGAMLDIDHGTYPYVTSSNTTAGGVATGSGLGPRNIDYVLGIIKAYCTRVGGGPFTTELFDEVGQEIARKGNEFGAVTGRPRRCGWFDAVAIRRAIQVNSITGFCMTKLDVLDGFDEVKICVGYKLPNGEVVDYAPLAAKDWEGVEPVYETMPGWKENTFRVTDVDQLPVNCLNYIKRIEEVTGVPVAILSTGPDRVETMILQDPFTA</sequence>
<reference key="1">
    <citation type="journal article" date="2004" name="Nat. Biotechnol.">
        <title>The genome sequence of the capnophilic rumen bacterium Mannheimia succiniciproducens.</title>
        <authorList>
            <person name="Hong S.H."/>
            <person name="Kim J.S."/>
            <person name="Lee S.Y."/>
            <person name="In Y.H."/>
            <person name="Choi S.S."/>
            <person name="Rih J.-K."/>
            <person name="Kim C.H."/>
            <person name="Jeong H."/>
            <person name="Hur C.G."/>
            <person name="Kim J.J."/>
        </authorList>
    </citation>
    <scope>NUCLEOTIDE SEQUENCE [LARGE SCALE GENOMIC DNA]</scope>
    <source>
        <strain>KCTC 0769BP / MBEL55E</strain>
    </source>
</reference>
<comment type="function">
    <text evidence="1">Plays an important role in the de novo pathway of purine nucleotide biosynthesis. Catalyzes the first committed step in the biosynthesis of AMP from IMP.</text>
</comment>
<comment type="catalytic activity">
    <reaction evidence="1">
        <text>IMP + L-aspartate + GTP = N(6)-(1,2-dicarboxyethyl)-AMP + GDP + phosphate + 2 H(+)</text>
        <dbReference type="Rhea" id="RHEA:15753"/>
        <dbReference type="ChEBI" id="CHEBI:15378"/>
        <dbReference type="ChEBI" id="CHEBI:29991"/>
        <dbReference type="ChEBI" id="CHEBI:37565"/>
        <dbReference type="ChEBI" id="CHEBI:43474"/>
        <dbReference type="ChEBI" id="CHEBI:57567"/>
        <dbReference type="ChEBI" id="CHEBI:58053"/>
        <dbReference type="ChEBI" id="CHEBI:58189"/>
        <dbReference type="EC" id="6.3.4.4"/>
    </reaction>
</comment>
<comment type="cofactor">
    <cofactor evidence="1">
        <name>Mg(2+)</name>
        <dbReference type="ChEBI" id="CHEBI:18420"/>
    </cofactor>
    <text evidence="1">Binds 1 Mg(2+) ion per subunit.</text>
</comment>
<comment type="pathway">
    <text evidence="1">Purine metabolism; AMP biosynthesis via de novo pathway; AMP from IMP: step 1/2.</text>
</comment>
<comment type="subunit">
    <text evidence="1">Homodimer.</text>
</comment>
<comment type="subcellular location">
    <subcellularLocation>
        <location evidence="1">Cytoplasm</location>
    </subcellularLocation>
</comment>
<comment type="similarity">
    <text evidence="1">Belongs to the adenylosuccinate synthetase family.</text>
</comment>
<organism>
    <name type="scientific">Mannheimia succiniciproducens (strain KCTC 0769BP / MBEL55E)</name>
    <dbReference type="NCBI Taxonomy" id="221988"/>
    <lineage>
        <taxon>Bacteria</taxon>
        <taxon>Pseudomonadati</taxon>
        <taxon>Pseudomonadota</taxon>
        <taxon>Gammaproteobacteria</taxon>
        <taxon>Pasteurellales</taxon>
        <taxon>Pasteurellaceae</taxon>
        <taxon>Basfia</taxon>
    </lineage>
</organism>
<dbReference type="EC" id="6.3.4.4" evidence="1"/>
<dbReference type="EMBL" id="AE016827">
    <property type="protein sequence ID" value="AAU38228.1"/>
    <property type="molecule type" value="Genomic_DNA"/>
</dbReference>
<dbReference type="RefSeq" id="WP_011200789.1">
    <property type="nucleotide sequence ID" value="NC_006300.1"/>
</dbReference>
<dbReference type="SMR" id="Q65S32"/>
<dbReference type="STRING" id="221988.MS1621"/>
<dbReference type="KEGG" id="msu:MS1621"/>
<dbReference type="eggNOG" id="COG0104">
    <property type="taxonomic scope" value="Bacteria"/>
</dbReference>
<dbReference type="HOGENOM" id="CLU_029848_0_0_6"/>
<dbReference type="OrthoDB" id="9807553at2"/>
<dbReference type="UniPathway" id="UPA00075">
    <property type="reaction ID" value="UER00335"/>
</dbReference>
<dbReference type="Proteomes" id="UP000000607">
    <property type="component" value="Chromosome"/>
</dbReference>
<dbReference type="GO" id="GO:0005737">
    <property type="term" value="C:cytoplasm"/>
    <property type="evidence" value="ECO:0007669"/>
    <property type="project" value="UniProtKB-SubCell"/>
</dbReference>
<dbReference type="GO" id="GO:0004019">
    <property type="term" value="F:adenylosuccinate synthase activity"/>
    <property type="evidence" value="ECO:0007669"/>
    <property type="project" value="UniProtKB-UniRule"/>
</dbReference>
<dbReference type="GO" id="GO:0005525">
    <property type="term" value="F:GTP binding"/>
    <property type="evidence" value="ECO:0007669"/>
    <property type="project" value="UniProtKB-UniRule"/>
</dbReference>
<dbReference type="GO" id="GO:0000287">
    <property type="term" value="F:magnesium ion binding"/>
    <property type="evidence" value="ECO:0007669"/>
    <property type="project" value="UniProtKB-UniRule"/>
</dbReference>
<dbReference type="GO" id="GO:0044208">
    <property type="term" value="P:'de novo' AMP biosynthetic process"/>
    <property type="evidence" value="ECO:0007669"/>
    <property type="project" value="UniProtKB-UniRule"/>
</dbReference>
<dbReference type="GO" id="GO:0046040">
    <property type="term" value="P:IMP metabolic process"/>
    <property type="evidence" value="ECO:0007669"/>
    <property type="project" value="TreeGrafter"/>
</dbReference>
<dbReference type="CDD" id="cd03108">
    <property type="entry name" value="AdSS"/>
    <property type="match status" value="1"/>
</dbReference>
<dbReference type="FunFam" id="1.10.300.10:FF:000001">
    <property type="entry name" value="Adenylosuccinate synthetase"/>
    <property type="match status" value="1"/>
</dbReference>
<dbReference type="FunFam" id="3.90.170.10:FF:000001">
    <property type="entry name" value="Adenylosuccinate synthetase"/>
    <property type="match status" value="1"/>
</dbReference>
<dbReference type="Gene3D" id="3.40.440.10">
    <property type="entry name" value="Adenylosuccinate Synthetase, subunit A, domain 1"/>
    <property type="match status" value="1"/>
</dbReference>
<dbReference type="Gene3D" id="1.10.300.10">
    <property type="entry name" value="Adenylosuccinate Synthetase, subunit A, domain 2"/>
    <property type="match status" value="1"/>
</dbReference>
<dbReference type="Gene3D" id="3.90.170.10">
    <property type="entry name" value="Adenylosuccinate Synthetase, subunit A, domain 3"/>
    <property type="match status" value="1"/>
</dbReference>
<dbReference type="HAMAP" id="MF_00011">
    <property type="entry name" value="Adenylosucc_synth"/>
    <property type="match status" value="1"/>
</dbReference>
<dbReference type="InterPro" id="IPR018220">
    <property type="entry name" value="Adenylosuccin_syn_GTP-bd"/>
</dbReference>
<dbReference type="InterPro" id="IPR033128">
    <property type="entry name" value="Adenylosuccin_syn_Lys_AS"/>
</dbReference>
<dbReference type="InterPro" id="IPR042109">
    <property type="entry name" value="Adenylosuccinate_synth_dom1"/>
</dbReference>
<dbReference type="InterPro" id="IPR042110">
    <property type="entry name" value="Adenylosuccinate_synth_dom2"/>
</dbReference>
<dbReference type="InterPro" id="IPR042111">
    <property type="entry name" value="Adenylosuccinate_synth_dom3"/>
</dbReference>
<dbReference type="InterPro" id="IPR001114">
    <property type="entry name" value="Adenylosuccinate_synthetase"/>
</dbReference>
<dbReference type="InterPro" id="IPR027417">
    <property type="entry name" value="P-loop_NTPase"/>
</dbReference>
<dbReference type="NCBIfam" id="NF002223">
    <property type="entry name" value="PRK01117.1"/>
    <property type="match status" value="1"/>
</dbReference>
<dbReference type="NCBIfam" id="TIGR00184">
    <property type="entry name" value="purA"/>
    <property type="match status" value="1"/>
</dbReference>
<dbReference type="PANTHER" id="PTHR11846">
    <property type="entry name" value="ADENYLOSUCCINATE SYNTHETASE"/>
    <property type="match status" value="1"/>
</dbReference>
<dbReference type="PANTHER" id="PTHR11846:SF0">
    <property type="entry name" value="ADENYLOSUCCINATE SYNTHETASE"/>
    <property type="match status" value="1"/>
</dbReference>
<dbReference type="Pfam" id="PF00709">
    <property type="entry name" value="Adenylsucc_synt"/>
    <property type="match status" value="1"/>
</dbReference>
<dbReference type="SMART" id="SM00788">
    <property type="entry name" value="Adenylsucc_synt"/>
    <property type="match status" value="1"/>
</dbReference>
<dbReference type="SUPFAM" id="SSF52540">
    <property type="entry name" value="P-loop containing nucleoside triphosphate hydrolases"/>
    <property type="match status" value="1"/>
</dbReference>
<dbReference type="PROSITE" id="PS01266">
    <property type="entry name" value="ADENYLOSUCCIN_SYN_1"/>
    <property type="match status" value="1"/>
</dbReference>
<dbReference type="PROSITE" id="PS00513">
    <property type="entry name" value="ADENYLOSUCCIN_SYN_2"/>
    <property type="match status" value="1"/>
</dbReference>
<gene>
    <name evidence="1" type="primary">purA</name>
    <name type="ordered locus">MS1621</name>
</gene>
<protein>
    <recommendedName>
        <fullName evidence="1">Adenylosuccinate synthetase</fullName>
        <shortName evidence="1">AMPSase</shortName>
        <shortName evidence="1">AdSS</shortName>
        <ecNumber evidence="1">6.3.4.4</ecNumber>
    </recommendedName>
    <alternativeName>
        <fullName evidence="1">IMP--aspartate ligase</fullName>
    </alternativeName>
</protein>
<proteinExistence type="inferred from homology"/>
<name>PURA_MANSM</name>
<feature type="chain" id="PRO_0000095197" description="Adenylosuccinate synthetase">
    <location>
        <begin position="1"/>
        <end position="432"/>
    </location>
</feature>
<feature type="active site" description="Proton acceptor" evidence="1">
    <location>
        <position position="14"/>
    </location>
</feature>
<feature type="active site" description="Proton donor" evidence="1">
    <location>
        <position position="42"/>
    </location>
</feature>
<feature type="binding site" evidence="1">
    <location>
        <begin position="13"/>
        <end position="19"/>
    </location>
    <ligand>
        <name>GTP</name>
        <dbReference type="ChEBI" id="CHEBI:37565"/>
    </ligand>
</feature>
<feature type="binding site" description="in other chain" evidence="1">
    <location>
        <begin position="14"/>
        <end position="17"/>
    </location>
    <ligand>
        <name>IMP</name>
        <dbReference type="ChEBI" id="CHEBI:58053"/>
        <note>ligand shared between dimeric partners</note>
    </ligand>
</feature>
<feature type="binding site" evidence="1">
    <location>
        <position position="14"/>
    </location>
    <ligand>
        <name>Mg(2+)</name>
        <dbReference type="ChEBI" id="CHEBI:18420"/>
    </ligand>
</feature>
<feature type="binding site" description="in other chain" evidence="1">
    <location>
        <begin position="39"/>
        <end position="42"/>
    </location>
    <ligand>
        <name>IMP</name>
        <dbReference type="ChEBI" id="CHEBI:58053"/>
        <note>ligand shared between dimeric partners</note>
    </ligand>
</feature>
<feature type="binding site" evidence="1">
    <location>
        <begin position="41"/>
        <end position="43"/>
    </location>
    <ligand>
        <name>GTP</name>
        <dbReference type="ChEBI" id="CHEBI:37565"/>
    </ligand>
</feature>
<feature type="binding site" evidence="1">
    <location>
        <position position="41"/>
    </location>
    <ligand>
        <name>Mg(2+)</name>
        <dbReference type="ChEBI" id="CHEBI:18420"/>
    </ligand>
</feature>
<feature type="binding site" description="in other chain" evidence="1">
    <location>
        <position position="130"/>
    </location>
    <ligand>
        <name>IMP</name>
        <dbReference type="ChEBI" id="CHEBI:58053"/>
        <note>ligand shared between dimeric partners</note>
    </ligand>
</feature>
<feature type="binding site" evidence="1">
    <location>
        <position position="144"/>
    </location>
    <ligand>
        <name>IMP</name>
        <dbReference type="ChEBI" id="CHEBI:58053"/>
        <note>ligand shared between dimeric partners</note>
    </ligand>
</feature>
<feature type="binding site" description="in other chain" evidence="1">
    <location>
        <position position="225"/>
    </location>
    <ligand>
        <name>IMP</name>
        <dbReference type="ChEBI" id="CHEBI:58053"/>
        <note>ligand shared between dimeric partners</note>
    </ligand>
</feature>
<feature type="binding site" description="in other chain" evidence="1">
    <location>
        <position position="240"/>
    </location>
    <ligand>
        <name>IMP</name>
        <dbReference type="ChEBI" id="CHEBI:58053"/>
        <note>ligand shared between dimeric partners</note>
    </ligand>
</feature>
<feature type="binding site" evidence="1">
    <location>
        <begin position="300"/>
        <end position="306"/>
    </location>
    <ligand>
        <name>substrate</name>
    </ligand>
</feature>
<feature type="binding site" description="in other chain" evidence="1">
    <location>
        <position position="304"/>
    </location>
    <ligand>
        <name>IMP</name>
        <dbReference type="ChEBI" id="CHEBI:58053"/>
        <note>ligand shared between dimeric partners</note>
    </ligand>
</feature>
<feature type="binding site" evidence="1">
    <location>
        <position position="306"/>
    </location>
    <ligand>
        <name>GTP</name>
        <dbReference type="ChEBI" id="CHEBI:37565"/>
    </ligand>
</feature>
<feature type="binding site" evidence="1">
    <location>
        <begin position="332"/>
        <end position="334"/>
    </location>
    <ligand>
        <name>GTP</name>
        <dbReference type="ChEBI" id="CHEBI:37565"/>
    </ligand>
</feature>
<feature type="binding site" evidence="1">
    <location>
        <begin position="415"/>
        <end position="417"/>
    </location>
    <ligand>
        <name>GTP</name>
        <dbReference type="ChEBI" id="CHEBI:37565"/>
    </ligand>
</feature>